<name>RS12_GEMAT</name>
<reference key="1">
    <citation type="submission" date="2006-03" db="EMBL/GenBank/DDBJ databases">
        <title>Complete genome sequence of Gemmatimonas aurantiaca T-27 that represents a novel phylum Gemmatimonadetes.</title>
        <authorList>
            <person name="Takasaki K."/>
            <person name="Ichikawa N."/>
            <person name="Miura H."/>
            <person name="Matsushita S."/>
            <person name="Watanabe Y."/>
            <person name="Oguchi A."/>
            <person name="Ankai A."/>
            <person name="Yashiro I."/>
            <person name="Takahashi M."/>
            <person name="Terui Y."/>
            <person name="Fukui S."/>
            <person name="Yokoyama H."/>
            <person name="Tanikawa S."/>
            <person name="Hanada S."/>
            <person name="Kamagata Y."/>
            <person name="Fujita N."/>
        </authorList>
    </citation>
    <scope>NUCLEOTIDE SEQUENCE [LARGE SCALE GENOMIC DNA]</scope>
    <source>
        <strain>DSM 14586 / JCM 11422 / NBRC 100505 / T-27</strain>
    </source>
</reference>
<comment type="function">
    <text evidence="2">With S4 and S5 plays an important role in translational accuracy.</text>
</comment>
<comment type="function">
    <text evidence="2">Interacts with and stabilizes bases of the 16S rRNA that are involved in tRNA selection in the A site and with the mRNA backbone. Located at the interface of the 30S and 50S subunits, it traverses the body of the 30S subunit contacting proteins on the other side and probably holding the rRNA structure together. The combined cluster of proteins S8, S12 and S17 appears to hold together the shoulder and platform of the 30S subunit.</text>
</comment>
<comment type="subunit">
    <text evidence="2">Part of the 30S ribosomal subunit. Contacts proteins S8 and S17. May interact with IF1 in the 30S initiation complex.</text>
</comment>
<comment type="similarity">
    <text evidence="2">Belongs to the universal ribosomal protein uS12 family.</text>
</comment>
<feature type="chain" id="PRO_1000205915" description="Small ribosomal subunit protein uS12">
    <location>
        <begin position="1"/>
        <end position="134"/>
    </location>
</feature>
<feature type="region of interest" description="Disordered" evidence="3">
    <location>
        <begin position="101"/>
        <end position="134"/>
    </location>
</feature>
<feature type="compositionally biased region" description="Low complexity" evidence="3">
    <location>
        <begin position="125"/>
        <end position="134"/>
    </location>
</feature>
<feature type="modified residue" description="3-methylthioaspartic acid" evidence="1">
    <location>
        <position position="89"/>
    </location>
</feature>
<evidence type="ECO:0000250" key="1"/>
<evidence type="ECO:0000255" key="2">
    <source>
        <dbReference type="HAMAP-Rule" id="MF_00403"/>
    </source>
</evidence>
<evidence type="ECO:0000256" key="3">
    <source>
        <dbReference type="SAM" id="MobiDB-lite"/>
    </source>
</evidence>
<evidence type="ECO:0000305" key="4"/>
<gene>
    <name evidence="2" type="primary">rpsL</name>
    <name type="ordered locus">GAU_0859</name>
</gene>
<sequence length="134" mass="14749">MPTINQLVRRARKDVVEKSKAPALKSNPFKRGVCTRVYTTTPKKPNSALRKVARIRLTNQLEVTAYIPGEGHNLQEHSIVLVRGGRVKDLPGVRYHIVRGTLDASGVNGRNQSRSKYGTKRPKPGQAAAGGKKK</sequence>
<protein>
    <recommendedName>
        <fullName evidence="2">Small ribosomal subunit protein uS12</fullName>
    </recommendedName>
    <alternativeName>
        <fullName evidence="4">30S ribosomal protein S12</fullName>
    </alternativeName>
</protein>
<accession>C1A6P1</accession>
<keyword id="KW-0488">Methylation</keyword>
<keyword id="KW-1185">Reference proteome</keyword>
<keyword id="KW-0687">Ribonucleoprotein</keyword>
<keyword id="KW-0689">Ribosomal protein</keyword>
<keyword id="KW-0694">RNA-binding</keyword>
<keyword id="KW-0699">rRNA-binding</keyword>
<keyword id="KW-0820">tRNA-binding</keyword>
<proteinExistence type="inferred from homology"/>
<dbReference type="EMBL" id="AP009153">
    <property type="protein sequence ID" value="BAH37901.1"/>
    <property type="molecule type" value="Genomic_DNA"/>
</dbReference>
<dbReference type="RefSeq" id="WP_012682348.1">
    <property type="nucleotide sequence ID" value="NC_012489.1"/>
</dbReference>
<dbReference type="SMR" id="C1A6P1"/>
<dbReference type="STRING" id="379066.GAU_0859"/>
<dbReference type="KEGG" id="gau:GAU_0859"/>
<dbReference type="eggNOG" id="COG0048">
    <property type="taxonomic scope" value="Bacteria"/>
</dbReference>
<dbReference type="HOGENOM" id="CLU_104295_1_2_0"/>
<dbReference type="OrthoDB" id="9802366at2"/>
<dbReference type="Proteomes" id="UP000002209">
    <property type="component" value="Chromosome"/>
</dbReference>
<dbReference type="GO" id="GO:0015935">
    <property type="term" value="C:small ribosomal subunit"/>
    <property type="evidence" value="ECO:0007669"/>
    <property type="project" value="InterPro"/>
</dbReference>
<dbReference type="GO" id="GO:0019843">
    <property type="term" value="F:rRNA binding"/>
    <property type="evidence" value="ECO:0007669"/>
    <property type="project" value="UniProtKB-UniRule"/>
</dbReference>
<dbReference type="GO" id="GO:0003735">
    <property type="term" value="F:structural constituent of ribosome"/>
    <property type="evidence" value="ECO:0007669"/>
    <property type="project" value="InterPro"/>
</dbReference>
<dbReference type="GO" id="GO:0000049">
    <property type="term" value="F:tRNA binding"/>
    <property type="evidence" value="ECO:0007669"/>
    <property type="project" value="UniProtKB-UniRule"/>
</dbReference>
<dbReference type="GO" id="GO:0006412">
    <property type="term" value="P:translation"/>
    <property type="evidence" value="ECO:0007669"/>
    <property type="project" value="UniProtKB-UniRule"/>
</dbReference>
<dbReference type="CDD" id="cd03368">
    <property type="entry name" value="Ribosomal_S12"/>
    <property type="match status" value="1"/>
</dbReference>
<dbReference type="FunFam" id="2.40.50.140:FF:000001">
    <property type="entry name" value="30S ribosomal protein S12"/>
    <property type="match status" value="1"/>
</dbReference>
<dbReference type="Gene3D" id="2.40.50.140">
    <property type="entry name" value="Nucleic acid-binding proteins"/>
    <property type="match status" value="1"/>
</dbReference>
<dbReference type="HAMAP" id="MF_00403_B">
    <property type="entry name" value="Ribosomal_uS12_B"/>
    <property type="match status" value="1"/>
</dbReference>
<dbReference type="InterPro" id="IPR012340">
    <property type="entry name" value="NA-bd_OB-fold"/>
</dbReference>
<dbReference type="InterPro" id="IPR006032">
    <property type="entry name" value="Ribosomal_uS12"/>
</dbReference>
<dbReference type="InterPro" id="IPR005679">
    <property type="entry name" value="Ribosomal_uS12_bac"/>
</dbReference>
<dbReference type="NCBIfam" id="TIGR00981">
    <property type="entry name" value="rpsL_bact"/>
    <property type="match status" value="1"/>
</dbReference>
<dbReference type="PANTHER" id="PTHR11652">
    <property type="entry name" value="30S RIBOSOMAL PROTEIN S12 FAMILY MEMBER"/>
    <property type="match status" value="1"/>
</dbReference>
<dbReference type="Pfam" id="PF00164">
    <property type="entry name" value="Ribosom_S12_S23"/>
    <property type="match status" value="1"/>
</dbReference>
<dbReference type="PIRSF" id="PIRSF002133">
    <property type="entry name" value="Ribosomal_S12/S23"/>
    <property type="match status" value="1"/>
</dbReference>
<dbReference type="PRINTS" id="PR01034">
    <property type="entry name" value="RIBOSOMALS12"/>
</dbReference>
<dbReference type="SUPFAM" id="SSF50249">
    <property type="entry name" value="Nucleic acid-binding proteins"/>
    <property type="match status" value="1"/>
</dbReference>
<dbReference type="PROSITE" id="PS00055">
    <property type="entry name" value="RIBOSOMAL_S12"/>
    <property type="match status" value="1"/>
</dbReference>
<organism>
    <name type="scientific">Gemmatimonas aurantiaca (strain DSM 14586 / JCM 11422 / NBRC 100505 / T-27)</name>
    <dbReference type="NCBI Taxonomy" id="379066"/>
    <lineage>
        <taxon>Bacteria</taxon>
        <taxon>Pseudomonadati</taxon>
        <taxon>Gemmatimonadota</taxon>
        <taxon>Gemmatimonadia</taxon>
        <taxon>Gemmatimonadales</taxon>
        <taxon>Gemmatimonadaceae</taxon>
        <taxon>Gemmatimonas</taxon>
    </lineage>
</organism>